<comment type="function">
    <text>Exhibits natriuretic and vasodepressor activity. Has a cGMP-stimulating activity.</text>
</comment>
<comment type="subcellular location">
    <subcellularLocation>
        <location>Secreted</location>
    </subcellularLocation>
</comment>
<comment type="similarity">
    <text evidence="3">Belongs to the natriuretic peptide family.</text>
</comment>
<protein>
    <recommendedName>
        <fullName>C-type natriuretic peptide 2</fullName>
    </recommendedName>
    <alternativeName>
        <fullName>CNP II</fullName>
    </alternativeName>
</protein>
<dbReference type="EMBL" id="D17414">
    <property type="protein sequence ID" value="BAA04236.1"/>
    <property type="molecule type" value="mRNA"/>
</dbReference>
<dbReference type="PIR" id="B54119">
    <property type="entry name" value="B54119"/>
</dbReference>
<dbReference type="GO" id="GO:0005576">
    <property type="term" value="C:extracellular region"/>
    <property type="evidence" value="ECO:0007669"/>
    <property type="project" value="UniProtKB-SubCell"/>
</dbReference>
<dbReference type="GO" id="GO:0005179">
    <property type="term" value="F:hormone activity"/>
    <property type="evidence" value="ECO:0007669"/>
    <property type="project" value="UniProtKB-KW"/>
</dbReference>
<dbReference type="GO" id="GO:0097746">
    <property type="term" value="P:blood vessel diameter maintenance"/>
    <property type="evidence" value="ECO:0007669"/>
    <property type="project" value="UniProtKB-KW"/>
</dbReference>
<dbReference type="GO" id="GO:0006182">
    <property type="term" value="P:cGMP biosynthetic process"/>
    <property type="evidence" value="ECO:0007669"/>
    <property type="project" value="TreeGrafter"/>
</dbReference>
<dbReference type="GO" id="GO:0007168">
    <property type="term" value="P:receptor guanylyl cyclase signaling pathway"/>
    <property type="evidence" value="ECO:0007669"/>
    <property type="project" value="TreeGrafter"/>
</dbReference>
<dbReference type="InterPro" id="IPR002406">
    <property type="entry name" value="C_natriurtcpep"/>
</dbReference>
<dbReference type="InterPro" id="IPR000663">
    <property type="entry name" value="Natr_peptide"/>
</dbReference>
<dbReference type="InterPro" id="IPR030480">
    <property type="entry name" value="Natr_peptide_CS"/>
</dbReference>
<dbReference type="PANTHER" id="PTHR12167">
    <property type="entry name" value="C-TYPE NATRIURETIC PEPTIDE"/>
    <property type="match status" value="1"/>
</dbReference>
<dbReference type="PANTHER" id="PTHR12167:SF2">
    <property type="entry name" value="C-TYPE NATRIURETIC PEPTIDE"/>
    <property type="match status" value="1"/>
</dbReference>
<dbReference type="Pfam" id="PF00212">
    <property type="entry name" value="ANP"/>
    <property type="match status" value="1"/>
</dbReference>
<dbReference type="PRINTS" id="PR00713">
    <property type="entry name" value="CNATPEPTIDE"/>
</dbReference>
<dbReference type="PRINTS" id="PR00710">
    <property type="entry name" value="NATPEPTIDES"/>
</dbReference>
<dbReference type="SMART" id="SM00183">
    <property type="entry name" value="NAT_PEP"/>
    <property type="match status" value="1"/>
</dbReference>
<dbReference type="PROSITE" id="PS00263">
    <property type="entry name" value="NATRIURETIC_PEPTIDE"/>
    <property type="match status" value="1"/>
</dbReference>
<organism>
    <name type="scientific">Aquarana catesbeiana</name>
    <name type="common">American bullfrog</name>
    <name type="synonym">Rana catesbeiana</name>
    <dbReference type="NCBI Taxonomy" id="8400"/>
    <lineage>
        <taxon>Eukaryota</taxon>
        <taxon>Metazoa</taxon>
        <taxon>Chordata</taxon>
        <taxon>Craniata</taxon>
        <taxon>Vertebrata</taxon>
        <taxon>Euteleostomi</taxon>
        <taxon>Amphibia</taxon>
        <taxon>Batrachia</taxon>
        <taxon>Anura</taxon>
        <taxon>Neobatrachia</taxon>
        <taxon>Ranoidea</taxon>
        <taxon>Ranidae</taxon>
        <taxon>Aquarana</taxon>
    </lineage>
</organism>
<keyword id="KW-0165">Cleavage on pair of basic residues</keyword>
<keyword id="KW-1015">Disulfide bond</keyword>
<keyword id="KW-0372">Hormone</keyword>
<keyword id="KW-0964">Secreted</keyword>
<keyword id="KW-0732">Signal</keyword>
<keyword id="KW-0838">Vasoactive</keyword>
<evidence type="ECO:0000250" key="1"/>
<evidence type="ECO:0000255" key="2"/>
<evidence type="ECO:0000305" key="3"/>
<name>ANFD_AQUCT</name>
<sequence>MHFCHIVGWGLVLAVLYLRTEAKPVAQAHQKSLRALLGEELAEYLVSGERGERSIDPKTRARLLRDIRADTRSRAAWTRLLNEHPNSRKIKGINKKGTSKGCFGLKLDRIGAMSGLGC</sequence>
<accession>P40756</accession>
<proteinExistence type="inferred from homology"/>
<feature type="signal peptide" evidence="2">
    <location>
        <begin position="1"/>
        <end position="22"/>
    </location>
</feature>
<feature type="propeptide" id="PRO_0000001575">
    <location>
        <begin position="23"/>
        <end position="96"/>
    </location>
</feature>
<feature type="peptide" id="PRO_0000001576" description="C-type natriuretic peptide 2">
    <location>
        <begin position="97"/>
        <end position="118"/>
    </location>
</feature>
<feature type="disulfide bond" evidence="1">
    <location>
        <begin position="102"/>
        <end position="118"/>
    </location>
</feature>
<reference key="1">
    <citation type="journal article" date="1994" name="J. Biol. Chem.">
        <title>Cloning and characterization of a novel natriuretic peptide in frog (Rana catesbeiana).</title>
        <authorList>
            <person name="Kojima M."/>
            <person name="Ohyama Y."/>
            <person name="Miyamoto K."/>
            <person name="Minamino N."/>
            <person name="Kangawa K."/>
            <person name="Matsuo H."/>
        </authorList>
    </citation>
    <scope>NUCLEOTIDE SEQUENCE [MRNA]</scope>
    <source>
        <tissue>Brain</tissue>
    </source>
</reference>